<reference key="1">
    <citation type="journal article" date="2011" name="Proc. Natl. Acad. Sci. U.S.A.">
        <title>Genomic anatomy of Escherichia coli O157:H7 outbreaks.</title>
        <authorList>
            <person name="Eppinger M."/>
            <person name="Mammel M.K."/>
            <person name="Leclerc J.E."/>
            <person name="Ravel J."/>
            <person name="Cebula T.A."/>
        </authorList>
    </citation>
    <scope>NUCLEOTIDE SEQUENCE [LARGE SCALE GENOMIC DNA]</scope>
    <source>
        <strain>EC4115 / EHEC</strain>
    </source>
</reference>
<comment type="function">
    <text evidence="1">Modulates the synthesis of GlmS, by affecting the processing and stability of the regulatory small RNA GlmZ. When glucosamine-6-phosphate (GlcN6P) concentrations are high in the cell, RapZ binds GlmZ and targets it to cleavage by RNase E. Consequently, GlmZ is inactivated and unable to activate GlmS synthesis. Under low GlcN6P concentrations, RapZ is sequestered and inactivated by an other regulatory small RNA, GlmY, preventing GlmZ degradation and leading to synthesis of GlmS.</text>
</comment>
<comment type="subunit">
    <text evidence="1">Homotrimer.</text>
</comment>
<comment type="similarity">
    <text evidence="1">Belongs to the RapZ-like family. RapZ subfamily.</text>
</comment>
<gene>
    <name evidence="1" type="primary">rapZ</name>
    <name type="ordered locus">ECH74115_4527</name>
</gene>
<organism>
    <name type="scientific">Escherichia coli O157:H7 (strain EC4115 / EHEC)</name>
    <dbReference type="NCBI Taxonomy" id="444450"/>
    <lineage>
        <taxon>Bacteria</taxon>
        <taxon>Pseudomonadati</taxon>
        <taxon>Pseudomonadota</taxon>
        <taxon>Gammaproteobacteria</taxon>
        <taxon>Enterobacterales</taxon>
        <taxon>Enterobacteriaceae</taxon>
        <taxon>Escherichia</taxon>
    </lineage>
</organism>
<dbReference type="EMBL" id="CP001164">
    <property type="protein sequence ID" value="ACI39259.1"/>
    <property type="molecule type" value="Genomic_DNA"/>
</dbReference>
<dbReference type="RefSeq" id="WP_000243741.1">
    <property type="nucleotide sequence ID" value="NC_011353.1"/>
</dbReference>
<dbReference type="SMR" id="B5YST8"/>
<dbReference type="GeneID" id="93778776"/>
<dbReference type="KEGG" id="ecf:ECH74115_4527"/>
<dbReference type="HOGENOM" id="CLU_059558_1_1_6"/>
<dbReference type="GO" id="GO:0005524">
    <property type="term" value="F:ATP binding"/>
    <property type="evidence" value="ECO:0007669"/>
    <property type="project" value="UniProtKB-UniRule"/>
</dbReference>
<dbReference type="GO" id="GO:0005525">
    <property type="term" value="F:GTP binding"/>
    <property type="evidence" value="ECO:0007669"/>
    <property type="project" value="UniProtKB-UniRule"/>
</dbReference>
<dbReference type="GO" id="GO:0003723">
    <property type="term" value="F:RNA binding"/>
    <property type="evidence" value="ECO:0007669"/>
    <property type="project" value="UniProtKB-KW"/>
</dbReference>
<dbReference type="Gene3D" id="3.40.50.300">
    <property type="entry name" value="P-loop containing nucleotide triphosphate hydrolases"/>
    <property type="match status" value="1"/>
</dbReference>
<dbReference type="HAMAP" id="MF_00636">
    <property type="entry name" value="RapZ_like"/>
    <property type="match status" value="1"/>
</dbReference>
<dbReference type="InterPro" id="IPR027417">
    <property type="entry name" value="P-loop_NTPase"/>
</dbReference>
<dbReference type="InterPro" id="IPR005337">
    <property type="entry name" value="RapZ-like"/>
</dbReference>
<dbReference type="InterPro" id="IPR053930">
    <property type="entry name" value="RapZ-like_N"/>
</dbReference>
<dbReference type="InterPro" id="IPR053931">
    <property type="entry name" value="RapZ_C"/>
</dbReference>
<dbReference type="NCBIfam" id="NF003828">
    <property type="entry name" value="PRK05416.1"/>
    <property type="match status" value="1"/>
</dbReference>
<dbReference type="PANTHER" id="PTHR30448">
    <property type="entry name" value="RNASE ADAPTER PROTEIN RAPZ"/>
    <property type="match status" value="1"/>
</dbReference>
<dbReference type="PANTHER" id="PTHR30448:SF0">
    <property type="entry name" value="RNASE ADAPTER PROTEIN RAPZ"/>
    <property type="match status" value="1"/>
</dbReference>
<dbReference type="Pfam" id="PF22740">
    <property type="entry name" value="PapZ_C"/>
    <property type="match status" value="1"/>
</dbReference>
<dbReference type="Pfam" id="PF03668">
    <property type="entry name" value="RapZ-like_N"/>
    <property type="match status" value="1"/>
</dbReference>
<dbReference type="PIRSF" id="PIRSF005052">
    <property type="entry name" value="P-loopkin"/>
    <property type="match status" value="1"/>
</dbReference>
<dbReference type="SUPFAM" id="SSF52540">
    <property type="entry name" value="P-loop containing nucleoside triphosphate hydrolases"/>
    <property type="match status" value="1"/>
</dbReference>
<sequence>MVLMIVSGRSGSGKSVALRALEDMGFYCVDNLPVVLLPDLARTLADREISAAVSIDVRNMPESPEIFEQAMSNLPDAFSPQLLFLDADRNTLIRRYSDTRRLHPLSSKNLSLESAIDKESDLLEPLRSRADLIVDTSEMSVHELAEMLRTRLLGKRERELTMVFESFGFKHGIPIDADYVFDVRFLPNPHWDPKLRPMTGLDKPVAAFLDRHTEVHNFIYQTRSYLELWLPMLETNNRSYLTVAIGCTGGKHRSVYIAEQLADYFRSRGKNVQSRHRTLEKRKP</sequence>
<protein>
    <recommendedName>
        <fullName evidence="1">RNase adapter protein RapZ</fullName>
    </recommendedName>
</protein>
<keyword id="KW-0067">ATP-binding</keyword>
<keyword id="KW-0342">GTP-binding</keyword>
<keyword id="KW-0547">Nucleotide-binding</keyword>
<keyword id="KW-0694">RNA-binding</keyword>
<evidence type="ECO:0000255" key="1">
    <source>
        <dbReference type="HAMAP-Rule" id="MF_00636"/>
    </source>
</evidence>
<accession>B5YST8</accession>
<proteinExistence type="inferred from homology"/>
<feature type="chain" id="PRO_1000130749" description="RNase adapter protein RapZ">
    <location>
        <begin position="1"/>
        <end position="284"/>
    </location>
</feature>
<feature type="region of interest" description="RNA-binding" evidence="1">
    <location>
        <begin position="266"/>
        <end position="284"/>
    </location>
</feature>
<feature type="binding site" evidence="1">
    <location>
        <begin position="8"/>
        <end position="15"/>
    </location>
    <ligand>
        <name>ATP</name>
        <dbReference type="ChEBI" id="CHEBI:30616"/>
    </ligand>
</feature>
<feature type="binding site" evidence="1">
    <location>
        <begin position="56"/>
        <end position="59"/>
    </location>
    <ligand>
        <name>GTP</name>
        <dbReference type="ChEBI" id="CHEBI:37565"/>
    </ligand>
</feature>
<name>RAPZ_ECO5E</name>